<sequence length="57" mass="6446">MAVQQNKPTRSKRGMRRSHDALTAVTSLSVDKTSGEKHLRHHITADGYYRGRKVIAK</sequence>
<name>RL32_SHIDS</name>
<gene>
    <name evidence="1" type="primary">rpmF</name>
    <name type="ordered locus">SDY_2061</name>
</gene>
<reference key="1">
    <citation type="journal article" date="2005" name="Nucleic Acids Res.">
        <title>Genome dynamics and diversity of Shigella species, the etiologic agents of bacillary dysentery.</title>
        <authorList>
            <person name="Yang F."/>
            <person name="Yang J."/>
            <person name="Zhang X."/>
            <person name="Chen L."/>
            <person name="Jiang Y."/>
            <person name="Yan Y."/>
            <person name="Tang X."/>
            <person name="Wang J."/>
            <person name="Xiong Z."/>
            <person name="Dong J."/>
            <person name="Xue Y."/>
            <person name="Zhu Y."/>
            <person name="Xu X."/>
            <person name="Sun L."/>
            <person name="Chen S."/>
            <person name="Nie H."/>
            <person name="Peng J."/>
            <person name="Xu J."/>
            <person name="Wang Y."/>
            <person name="Yuan Z."/>
            <person name="Wen Y."/>
            <person name="Yao Z."/>
            <person name="Shen Y."/>
            <person name="Qiang B."/>
            <person name="Hou Y."/>
            <person name="Yu J."/>
            <person name="Jin Q."/>
        </authorList>
    </citation>
    <scope>NUCLEOTIDE SEQUENCE [LARGE SCALE GENOMIC DNA]</scope>
    <source>
        <strain>Sd197</strain>
    </source>
</reference>
<keyword id="KW-1185">Reference proteome</keyword>
<keyword id="KW-0687">Ribonucleoprotein</keyword>
<keyword id="KW-0689">Ribosomal protein</keyword>
<accession>Q32EU9</accession>
<comment type="similarity">
    <text evidence="1">Belongs to the bacterial ribosomal protein bL32 family.</text>
</comment>
<feature type="chain" id="PRO_0000225763" description="Large ribosomal subunit protein bL32">
    <location>
        <begin position="1"/>
        <end position="57"/>
    </location>
</feature>
<feature type="region of interest" description="Disordered" evidence="2">
    <location>
        <begin position="1"/>
        <end position="38"/>
    </location>
</feature>
<proteinExistence type="inferred from homology"/>
<protein>
    <recommendedName>
        <fullName evidence="1">Large ribosomal subunit protein bL32</fullName>
    </recommendedName>
    <alternativeName>
        <fullName evidence="3">50S ribosomal protein L32</fullName>
    </alternativeName>
</protein>
<dbReference type="EMBL" id="CP000034">
    <property type="protein sequence ID" value="ABB62156.1"/>
    <property type="molecule type" value="Genomic_DNA"/>
</dbReference>
<dbReference type="RefSeq" id="WP_000290727.1">
    <property type="nucleotide sequence ID" value="NC_007606.1"/>
</dbReference>
<dbReference type="RefSeq" id="YP_403647.1">
    <property type="nucleotide sequence ID" value="NC_007606.1"/>
</dbReference>
<dbReference type="SMR" id="Q32EU9"/>
<dbReference type="STRING" id="300267.SDY_2061"/>
<dbReference type="EnsemblBacteria" id="ABB62156">
    <property type="protein sequence ID" value="ABB62156"/>
    <property type="gene ID" value="SDY_2061"/>
</dbReference>
<dbReference type="GeneID" id="93776319"/>
<dbReference type="KEGG" id="sdy:SDY_2061"/>
<dbReference type="PATRIC" id="fig|300267.13.peg.2476"/>
<dbReference type="HOGENOM" id="CLU_129084_2_1_6"/>
<dbReference type="Proteomes" id="UP000002716">
    <property type="component" value="Chromosome"/>
</dbReference>
<dbReference type="GO" id="GO:0015934">
    <property type="term" value="C:large ribosomal subunit"/>
    <property type="evidence" value="ECO:0007669"/>
    <property type="project" value="InterPro"/>
</dbReference>
<dbReference type="GO" id="GO:0003735">
    <property type="term" value="F:structural constituent of ribosome"/>
    <property type="evidence" value="ECO:0007669"/>
    <property type="project" value="InterPro"/>
</dbReference>
<dbReference type="GO" id="GO:0006412">
    <property type="term" value="P:translation"/>
    <property type="evidence" value="ECO:0007669"/>
    <property type="project" value="UniProtKB-UniRule"/>
</dbReference>
<dbReference type="HAMAP" id="MF_00340">
    <property type="entry name" value="Ribosomal_bL32"/>
    <property type="match status" value="1"/>
</dbReference>
<dbReference type="InterPro" id="IPR002677">
    <property type="entry name" value="Ribosomal_bL32"/>
</dbReference>
<dbReference type="InterPro" id="IPR044957">
    <property type="entry name" value="Ribosomal_bL32_bact"/>
</dbReference>
<dbReference type="InterPro" id="IPR011332">
    <property type="entry name" value="Ribosomal_zn-bd"/>
</dbReference>
<dbReference type="NCBIfam" id="TIGR01031">
    <property type="entry name" value="rpmF_bact"/>
    <property type="match status" value="1"/>
</dbReference>
<dbReference type="PANTHER" id="PTHR35534">
    <property type="entry name" value="50S RIBOSOMAL PROTEIN L32"/>
    <property type="match status" value="1"/>
</dbReference>
<dbReference type="PANTHER" id="PTHR35534:SF1">
    <property type="entry name" value="LARGE RIBOSOMAL SUBUNIT PROTEIN BL32"/>
    <property type="match status" value="1"/>
</dbReference>
<dbReference type="Pfam" id="PF01783">
    <property type="entry name" value="Ribosomal_L32p"/>
    <property type="match status" value="1"/>
</dbReference>
<dbReference type="SUPFAM" id="SSF57829">
    <property type="entry name" value="Zn-binding ribosomal proteins"/>
    <property type="match status" value="1"/>
</dbReference>
<evidence type="ECO:0000255" key="1">
    <source>
        <dbReference type="HAMAP-Rule" id="MF_00340"/>
    </source>
</evidence>
<evidence type="ECO:0000256" key="2">
    <source>
        <dbReference type="SAM" id="MobiDB-lite"/>
    </source>
</evidence>
<evidence type="ECO:0000305" key="3"/>
<organism>
    <name type="scientific">Shigella dysenteriae serotype 1 (strain Sd197)</name>
    <dbReference type="NCBI Taxonomy" id="300267"/>
    <lineage>
        <taxon>Bacteria</taxon>
        <taxon>Pseudomonadati</taxon>
        <taxon>Pseudomonadota</taxon>
        <taxon>Gammaproteobacteria</taxon>
        <taxon>Enterobacterales</taxon>
        <taxon>Enterobacteriaceae</taxon>
        <taxon>Shigella</taxon>
    </lineage>
</organism>